<accession>A1XGM9</accession>
<dbReference type="EC" id="2.7.7.6" evidence="1"/>
<dbReference type="EMBL" id="DQ359689">
    <property type="protein sequence ID" value="ABC70747.1"/>
    <property type="molecule type" value="Genomic_DNA"/>
</dbReference>
<dbReference type="RefSeq" id="YP_001004177.1">
    <property type="nucleotide sequence ID" value="NC_008796.1"/>
</dbReference>
<dbReference type="SMR" id="A1XGM9"/>
<dbReference type="GeneID" id="4712095"/>
<dbReference type="GO" id="GO:0009507">
    <property type="term" value="C:chloroplast"/>
    <property type="evidence" value="ECO:0007669"/>
    <property type="project" value="UniProtKB-SubCell"/>
</dbReference>
<dbReference type="GO" id="GO:0000428">
    <property type="term" value="C:DNA-directed RNA polymerase complex"/>
    <property type="evidence" value="ECO:0007669"/>
    <property type="project" value="UniProtKB-KW"/>
</dbReference>
<dbReference type="GO" id="GO:0005739">
    <property type="term" value="C:mitochondrion"/>
    <property type="evidence" value="ECO:0007669"/>
    <property type="project" value="GOC"/>
</dbReference>
<dbReference type="GO" id="GO:0003677">
    <property type="term" value="F:DNA binding"/>
    <property type="evidence" value="ECO:0007669"/>
    <property type="project" value="UniProtKB-UniRule"/>
</dbReference>
<dbReference type="GO" id="GO:0003899">
    <property type="term" value="F:DNA-directed RNA polymerase activity"/>
    <property type="evidence" value="ECO:0007669"/>
    <property type="project" value="UniProtKB-UniRule"/>
</dbReference>
<dbReference type="GO" id="GO:0000287">
    <property type="term" value="F:magnesium ion binding"/>
    <property type="evidence" value="ECO:0007669"/>
    <property type="project" value="UniProtKB-UniRule"/>
</dbReference>
<dbReference type="GO" id="GO:0008270">
    <property type="term" value="F:zinc ion binding"/>
    <property type="evidence" value="ECO:0007669"/>
    <property type="project" value="UniProtKB-UniRule"/>
</dbReference>
<dbReference type="GO" id="GO:0006351">
    <property type="term" value="P:DNA-templated transcription"/>
    <property type="evidence" value="ECO:0007669"/>
    <property type="project" value="UniProtKB-UniRule"/>
</dbReference>
<dbReference type="FunFam" id="4.10.860.120:FF:000007">
    <property type="entry name" value="DNA-directed RNA polymerase subunit gamma"/>
    <property type="match status" value="1"/>
</dbReference>
<dbReference type="Gene3D" id="1.10.40.90">
    <property type="match status" value="1"/>
</dbReference>
<dbReference type="Gene3D" id="2.40.40.20">
    <property type="match status" value="1"/>
</dbReference>
<dbReference type="Gene3D" id="4.10.860.120">
    <property type="entry name" value="RNA polymerase II, clamp domain"/>
    <property type="match status" value="1"/>
</dbReference>
<dbReference type="Gene3D" id="1.10.274.100">
    <property type="entry name" value="RNA polymerase Rpb1, domain 3"/>
    <property type="match status" value="1"/>
</dbReference>
<dbReference type="HAMAP" id="MF_01323">
    <property type="entry name" value="RNApol_bact_RpoC1"/>
    <property type="match status" value="1"/>
</dbReference>
<dbReference type="InterPro" id="IPR045867">
    <property type="entry name" value="DNA-dir_RpoC_beta_prime"/>
</dbReference>
<dbReference type="InterPro" id="IPR000722">
    <property type="entry name" value="RNA_pol_asu"/>
</dbReference>
<dbReference type="InterPro" id="IPR006592">
    <property type="entry name" value="RNA_pol_N"/>
</dbReference>
<dbReference type="InterPro" id="IPR007080">
    <property type="entry name" value="RNA_pol_Rpb1_1"/>
</dbReference>
<dbReference type="InterPro" id="IPR042102">
    <property type="entry name" value="RNA_pol_Rpb1_3_sf"/>
</dbReference>
<dbReference type="InterPro" id="IPR044893">
    <property type="entry name" value="RNA_pol_Rpb1_clamp_domain"/>
</dbReference>
<dbReference type="InterPro" id="IPR034678">
    <property type="entry name" value="RNApol_RpoC1"/>
</dbReference>
<dbReference type="PANTHER" id="PTHR19376">
    <property type="entry name" value="DNA-DIRECTED RNA POLYMERASE"/>
    <property type="match status" value="1"/>
</dbReference>
<dbReference type="PANTHER" id="PTHR19376:SF54">
    <property type="entry name" value="DNA-DIRECTED RNA POLYMERASE SUBUNIT BETA"/>
    <property type="match status" value="1"/>
</dbReference>
<dbReference type="Pfam" id="PF04997">
    <property type="entry name" value="RNA_pol_Rpb1_1"/>
    <property type="match status" value="1"/>
</dbReference>
<dbReference type="Pfam" id="PF00623">
    <property type="entry name" value="RNA_pol_Rpb1_2"/>
    <property type="match status" value="2"/>
</dbReference>
<dbReference type="SMART" id="SM00663">
    <property type="entry name" value="RPOLA_N"/>
    <property type="match status" value="1"/>
</dbReference>
<dbReference type="SUPFAM" id="SSF64484">
    <property type="entry name" value="beta and beta-prime subunits of DNA dependent RNA-polymerase"/>
    <property type="match status" value="1"/>
</dbReference>
<reference key="1">
    <citation type="journal article" date="2007" name="BMC Genomics">
        <title>Comparative chloroplast genomics: analyses including new sequences from the angiosperms Nuphar advena and Ranunculus macranthus.</title>
        <authorList>
            <person name="Raubeson L.A."/>
            <person name="Peery R."/>
            <person name="Chumley T.W."/>
            <person name="Dziubek C."/>
            <person name="Fourcade H.M."/>
            <person name="Boore J.L."/>
            <person name="Jansen R.K."/>
        </authorList>
    </citation>
    <scope>NUCLEOTIDE SEQUENCE [LARGE SCALE GENOMIC DNA]</scope>
</reference>
<protein>
    <recommendedName>
        <fullName evidence="1">DNA-directed RNA polymerase subunit beta'</fullName>
        <ecNumber evidence="1">2.7.7.6</ecNumber>
    </recommendedName>
    <alternativeName>
        <fullName evidence="1">PEP</fullName>
    </alternativeName>
    <alternativeName>
        <fullName evidence="1">Plastid-encoded RNA polymerase subunit beta'</fullName>
        <shortName evidence="1">RNA polymerase subunit beta'</shortName>
    </alternativeName>
</protein>
<geneLocation type="chloroplast"/>
<keyword id="KW-0150">Chloroplast</keyword>
<keyword id="KW-0240">DNA-directed RNA polymerase</keyword>
<keyword id="KW-0460">Magnesium</keyword>
<keyword id="KW-0479">Metal-binding</keyword>
<keyword id="KW-0548">Nucleotidyltransferase</keyword>
<keyword id="KW-0934">Plastid</keyword>
<keyword id="KW-0804">Transcription</keyword>
<keyword id="KW-0808">Transferase</keyword>
<keyword id="KW-0862">Zinc</keyword>
<comment type="function">
    <text evidence="1">DNA-dependent RNA polymerase catalyzes the transcription of DNA into RNA using the four ribonucleoside triphosphates as substrates.</text>
</comment>
<comment type="catalytic activity">
    <reaction evidence="1">
        <text>RNA(n) + a ribonucleoside 5'-triphosphate = RNA(n+1) + diphosphate</text>
        <dbReference type="Rhea" id="RHEA:21248"/>
        <dbReference type="Rhea" id="RHEA-COMP:14527"/>
        <dbReference type="Rhea" id="RHEA-COMP:17342"/>
        <dbReference type="ChEBI" id="CHEBI:33019"/>
        <dbReference type="ChEBI" id="CHEBI:61557"/>
        <dbReference type="ChEBI" id="CHEBI:140395"/>
        <dbReference type="EC" id="2.7.7.6"/>
    </reaction>
</comment>
<comment type="cofactor">
    <cofactor evidence="1">
        <name>Mg(2+)</name>
        <dbReference type="ChEBI" id="CHEBI:18420"/>
    </cofactor>
    <text evidence="1">Binds 1 Mg(2+) ion per subunit.</text>
</comment>
<comment type="cofactor">
    <cofactor evidence="1">
        <name>Zn(2+)</name>
        <dbReference type="ChEBI" id="CHEBI:29105"/>
    </cofactor>
    <text evidence="1">Binds 1 Zn(2+) ion per subunit.</text>
</comment>
<comment type="subunit">
    <text evidence="1">In plastids the minimal PEP RNA polymerase catalytic core is composed of four subunits: alpha, beta, beta', and beta''. When a (nuclear-encoded) sigma factor is associated with the core the holoenzyme is formed, which can initiate transcription.</text>
</comment>
<comment type="subcellular location">
    <subcellularLocation>
        <location evidence="1">Plastid</location>
        <location evidence="1">Chloroplast</location>
    </subcellularLocation>
</comment>
<comment type="similarity">
    <text evidence="1">Belongs to the RNA polymerase beta' chain family. RpoC1 subfamily.</text>
</comment>
<proteinExistence type="inferred from homology"/>
<evidence type="ECO:0000255" key="1">
    <source>
        <dbReference type="HAMAP-Rule" id="MF_01323"/>
    </source>
</evidence>
<name>RPOC1_RANMC</name>
<gene>
    <name evidence="1" type="primary">rpoC1</name>
</gene>
<sequence length="680" mass="78176">MIDRYKHQQLQIGLVSPQQIITWAEKILPNGEIVGEVTKPYTFHYKTNKPEKDGLFCERIFGPIKSGICACGNYRVIGNEKEDPKFCEQCGVEFVDSRVRRYQMGYIKLACPVTHVWYLKRLPSYIANLLDKPLKELEGLVYCDFSFARPVVKNPTFLRLRGSFEYEIQSWKYSIPLFFTTQGFDTFRNREISTGASAIREQLADLDLRLIIDCSLLEWKELGEEGPAGNEWEDRKMGRRKSFLVRRMELAKHFIRTNVEPERMVLCLLPVLPPELRPIIQIDGGKLMSSDINELYRRVIYRNNTLTDLLTTSRSTPGELVMCQEKLVQEAVDTLLDNGIRGQPTRDGHNKIYKSFSDVIEGKEGRFRETLLGKRVDYSGRSVIVVGPSLSLHRCGLPREIAIELFHTFVIRGLIRQHIASNIGVAKSKIREKAPIVWEILQEVMQGHPVLLNRAPTLHRLGIQAFQPILVEGRAICLHPLVCKGFNADFDGDQMAVHIPLSLEAQAEARLLMFSHMNLLSPAIGDPISVPTQDMLMGLYVLTIGNRRGICANRYNPWNHRNSQNEKIDDNNHTYTKEPYFCSSYDALGAFRQKRINLDSPLWLRWRLDQRVIAPREVPIEVQCESFGTYHEIYGHYLIVRNVNKKIFCIDIRTTVGLISFYREIEEAIQGFCRACSYST</sequence>
<feature type="chain" id="PRO_0000353514" description="DNA-directed RNA polymerase subunit beta'">
    <location>
        <begin position="1"/>
        <end position="680"/>
    </location>
</feature>
<feature type="binding site" evidence="1">
    <location>
        <position position="69"/>
    </location>
    <ligand>
        <name>Zn(2+)</name>
        <dbReference type="ChEBI" id="CHEBI:29105"/>
    </ligand>
</feature>
<feature type="binding site" evidence="1">
    <location>
        <position position="71"/>
    </location>
    <ligand>
        <name>Zn(2+)</name>
        <dbReference type="ChEBI" id="CHEBI:29105"/>
    </ligand>
</feature>
<feature type="binding site" evidence="1">
    <location>
        <position position="87"/>
    </location>
    <ligand>
        <name>Zn(2+)</name>
        <dbReference type="ChEBI" id="CHEBI:29105"/>
    </ligand>
</feature>
<feature type="binding site" evidence="1">
    <location>
        <position position="90"/>
    </location>
    <ligand>
        <name>Zn(2+)</name>
        <dbReference type="ChEBI" id="CHEBI:29105"/>
    </ligand>
</feature>
<feature type="binding site" evidence="1">
    <location>
        <position position="489"/>
    </location>
    <ligand>
        <name>Mg(2+)</name>
        <dbReference type="ChEBI" id="CHEBI:18420"/>
    </ligand>
</feature>
<feature type="binding site" evidence="1">
    <location>
        <position position="491"/>
    </location>
    <ligand>
        <name>Mg(2+)</name>
        <dbReference type="ChEBI" id="CHEBI:18420"/>
    </ligand>
</feature>
<feature type="binding site" evidence="1">
    <location>
        <position position="493"/>
    </location>
    <ligand>
        <name>Mg(2+)</name>
        <dbReference type="ChEBI" id="CHEBI:18420"/>
    </ligand>
</feature>
<organism>
    <name type="scientific">Ranunculus macranthus</name>
    <name type="common">Large buttercup</name>
    <dbReference type="NCBI Taxonomy" id="334596"/>
    <lineage>
        <taxon>Eukaryota</taxon>
        <taxon>Viridiplantae</taxon>
        <taxon>Streptophyta</taxon>
        <taxon>Embryophyta</taxon>
        <taxon>Tracheophyta</taxon>
        <taxon>Spermatophyta</taxon>
        <taxon>Magnoliopsida</taxon>
        <taxon>Ranunculales</taxon>
        <taxon>Ranunculaceae</taxon>
        <taxon>Ranunculoideae</taxon>
        <taxon>Ranunculeae</taxon>
        <taxon>Ranunculus</taxon>
    </lineage>
</organism>